<evidence type="ECO:0000250" key="1">
    <source>
        <dbReference type="UniProtKB" id="P53026"/>
    </source>
</evidence>
<evidence type="ECO:0000269" key="2">
    <source>
    </source>
</evidence>
<evidence type="ECO:0000269" key="3">
    <source>
    </source>
</evidence>
<evidence type="ECO:0000269" key="4">
    <source>
    </source>
</evidence>
<evidence type="ECO:0000303" key="5">
    <source>
    </source>
</evidence>
<evidence type="ECO:0000305" key="6"/>
<evidence type="ECO:0000305" key="7">
    <source>
    </source>
</evidence>
<evidence type="ECO:0007744" key="8">
    <source>
        <dbReference type="PDB" id="6LQM"/>
    </source>
</evidence>
<evidence type="ECO:0007744" key="9">
    <source>
        <dbReference type="PDB" id="6LSR"/>
    </source>
</evidence>
<evidence type="ECO:0007744" key="10">
    <source>
        <dbReference type="PDB" id="6LU8"/>
    </source>
</evidence>
<evidence type="ECO:0007744" key="11">
    <source>
        <dbReference type="PDB" id="8QFC"/>
    </source>
</evidence>
<evidence type="ECO:0007744" key="12">
    <source>
    </source>
</evidence>
<evidence type="ECO:0007744" key="13">
    <source>
    </source>
</evidence>
<evidence type="ECO:0007744" key="14">
    <source>
    </source>
</evidence>
<evidence type="ECO:0007829" key="15">
    <source>
        <dbReference type="PDB" id="8QFC"/>
    </source>
</evidence>
<protein>
    <recommendedName>
        <fullName evidence="5">Large ribosomal subunit protein uL1</fullName>
    </recommendedName>
    <alternativeName>
        <fullName>60S ribosomal protein L10a</fullName>
    </alternativeName>
    <alternativeName>
        <fullName>CSA-19</fullName>
    </alternativeName>
    <alternativeName>
        <fullName>Neural precursor cell expressed developmentally down-regulated protein 6</fullName>
        <shortName>NEDD-6</shortName>
    </alternativeName>
</protein>
<feature type="initiator methionine" description="Removed" evidence="2">
    <location>
        <position position="1"/>
    </location>
</feature>
<feature type="chain" id="PRO_0000125818" description="Large ribosomal subunit protein uL1">
    <location>
        <begin position="2"/>
        <end position="217"/>
    </location>
</feature>
<feature type="modified residue" description="N-acetylserine" evidence="7">
    <location>
        <position position="2"/>
    </location>
</feature>
<feature type="modified residue" description="Phosphotyrosine" evidence="1">
    <location>
        <position position="11"/>
    </location>
</feature>
<feature type="modified residue" description="N6-acetyllysine" evidence="1">
    <location>
        <position position="91"/>
    </location>
</feature>
<feature type="modified residue" description="N6-acetyllysine" evidence="12">
    <location>
        <position position="106"/>
    </location>
</feature>
<feature type="modified residue" description="N6-acetyllysine; alternate" evidence="12">
    <location>
        <position position="118"/>
    </location>
</feature>
<feature type="cross-link" description="Glycyl lysine isopeptide (Lys-Gly) (interchain with G-Cter in SUMO1); alternate" evidence="13">
    <location>
        <position position="118"/>
    </location>
</feature>
<feature type="cross-link" description="Glycyl lysine isopeptide (Lys-Gly) (interchain with G-Cter in SUMO2); alternate" evidence="13 14">
    <location>
        <position position="118"/>
    </location>
</feature>
<feature type="cross-link" description="Glycyl lysine isopeptide (Lys-Gly) (interchain with G-Cter in SUMO2)" evidence="14">
    <location>
        <position position="161"/>
    </location>
</feature>
<feature type="sequence variant" id="VAR_034458" description="In dbSNP:rs17838763.">
    <original>T</original>
    <variation>P</variation>
    <location>
        <position position="154"/>
    </location>
</feature>
<feature type="sequence conflict" description="In Ref. 1; AAA86463." evidence="6" ref="1">
    <original>A</original>
    <variation>V</variation>
    <location>
        <position position="104"/>
    </location>
</feature>
<feature type="sequence conflict" description="In Ref. 2; BAC16802." evidence="6" ref="2">
    <original>T</original>
    <variation>P</variation>
    <location>
        <position position="209"/>
    </location>
</feature>
<feature type="helix" evidence="15">
    <location>
        <begin position="7"/>
        <end position="18"/>
    </location>
</feature>
<feature type="strand" evidence="15">
    <location>
        <begin position="31"/>
        <end position="38"/>
    </location>
</feature>
<feature type="turn" evidence="15">
    <location>
        <begin position="43"/>
        <end position="45"/>
    </location>
</feature>
<feature type="strand" evidence="15">
    <location>
        <begin position="50"/>
        <end position="54"/>
    </location>
</feature>
<feature type="strand" evidence="15">
    <location>
        <begin position="65"/>
        <end position="68"/>
    </location>
</feature>
<feature type="helix" evidence="15">
    <location>
        <begin position="71"/>
        <end position="78"/>
    </location>
</feature>
<feature type="helix" evidence="15">
    <location>
        <begin position="87"/>
        <end position="92"/>
    </location>
</feature>
<feature type="helix" evidence="15">
    <location>
        <begin position="97"/>
        <end position="106"/>
    </location>
</feature>
<feature type="strand" evidence="15">
    <location>
        <begin position="108"/>
        <end position="113"/>
    </location>
</feature>
<feature type="helix" evidence="15">
    <location>
        <begin position="114"/>
        <end position="117"/>
    </location>
</feature>
<feature type="helix" evidence="15">
    <location>
        <begin position="120"/>
        <end position="123"/>
    </location>
</feature>
<feature type="turn" evidence="15">
    <location>
        <begin position="126"/>
        <end position="132"/>
    </location>
</feature>
<feature type="strand" evidence="15">
    <location>
        <begin position="136"/>
        <end position="138"/>
    </location>
</feature>
<feature type="helix" evidence="15">
    <location>
        <begin position="144"/>
        <end position="151"/>
    </location>
</feature>
<feature type="strand" evidence="15">
    <location>
        <begin position="154"/>
        <end position="158"/>
    </location>
</feature>
<feature type="strand" evidence="15">
    <location>
        <begin position="160"/>
        <end position="174"/>
    </location>
</feature>
<feature type="helix" evidence="15">
    <location>
        <begin position="178"/>
        <end position="193"/>
    </location>
</feature>
<feature type="strand" evidence="15">
    <location>
        <begin position="194"/>
        <end position="196"/>
    </location>
</feature>
<feature type="turn" evidence="15">
    <location>
        <begin position="197"/>
        <end position="200"/>
    </location>
</feature>
<feature type="strand" evidence="15">
    <location>
        <begin position="201"/>
        <end position="207"/>
    </location>
</feature>
<feature type="strand" evidence="15">
    <location>
        <begin position="214"/>
        <end position="217"/>
    </location>
</feature>
<sequence>MSSKVSRDTLYEAVREVLHGNQRKRRKFLETVELQISLKNYDPQKDKRFSGTVRLKSTPRPKFSVCVLGDQQHCDEAKAVDIPHMDIEALKKLNKNKKLVKKLAKKYDAFLASESLIKQIPRILGPGLNKAGKFPSLLTHNENMVAKVDEVKSTIKFQMKKVLCLAVAVGHVKMTDDELVYNIHLAVNFLVSLLKKNWQNVRALYIKSTMGKPQRLY</sequence>
<reference key="1">
    <citation type="journal article" date="1995" name="Mol. Immunol.">
        <title>Identification of genes downregulated in the thymus by cyclosporin-A: preliminary characterization of clone CSA-19.</title>
        <authorList>
            <person name="Fisicaro N."/>
            <person name="Katerelos M."/>
            <person name="Williams J."/>
            <person name="Power D."/>
            <person name="D'Apice A."/>
            <person name="Pearse M."/>
        </authorList>
    </citation>
    <scope>NUCLEOTIDE SEQUENCE [MRNA]</scope>
</reference>
<reference key="2">
    <citation type="submission" date="2002-03" db="EMBL/GenBank/DDBJ databases">
        <title>Identification of a tumor-rejection antigen recognized by HLA-B46 restricted CTL.</title>
        <authorList>
            <person name="Azuma K."/>
            <person name="Shichijo S."/>
            <person name="Itoh K."/>
        </authorList>
    </citation>
    <scope>NUCLEOTIDE SEQUENCE [MRNA]</scope>
</reference>
<reference key="3">
    <citation type="submission" date="2004-10" db="EMBL/GenBank/DDBJ databases">
        <title>Cloning of human full-length CDSs in BD Creator(TM) system donor vector.</title>
        <authorList>
            <person name="Kalnine N."/>
            <person name="Chen X."/>
            <person name="Rolfs A."/>
            <person name="Halleck A."/>
            <person name="Hines L."/>
            <person name="Eisenstein S."/>
            <person name="Koundinya M."/>
            <person name="Raphael J."/>
            <person name="Moreira D."/>
            <person name="Kelley T."/>
            <person name="LaBaer J."/>
            <person name="Lin Y."/>
            <person name="Phelan M."/>
            <person name="Farmer A."/>
        </authorList>
    </citation>
    <scope>NUCLEOTIDE SEQUENCE [LARGE SCALE MRNA]</scope>
</reference>
<reference key="4">
    <citation type="journal article" date="2004" name="Nat. Genet.">
        <title>Complete sequencing and characterization of 21,243 full-length human cDNAs.</title>
        <authorList>
            <person name="Ota T."/>
            <person name="Suzuki Y."/>
            <person name="Nishikawa T."/>
            <person name="Otsuki T."/>
            <person name="Sugiyama T."/>
            <person name="Irie R."/>
            <person name="Wakamatsu A."/>
            <person name="Hayashi K."/>
            <person name="Sato H."/>
            <person name="Nagai K."/>
            <person name="Kimura K."/>
            <person name="Makita H."/>
            <person name="Sekine M."/>
            <person name="Obayashi M."/>
            <person name="Nishi T."/>
            <person name="Shibahara T."/>
            <person name="Tanaka T."/>
            <person name="Ishii S."/>
            <person name="Yamamoto J."/>
            <person name="Saito K."/>
            <person name="Kawai Y."/>
            <person name="Isono Y."/>
            <person name="Nakamura Y."/>
            <person name="Nagahari K."/>
            <person name="Murakami K."/>
            <person name="Yasuda T."/>
            <person name="Iwayanagi T."/>
            <person name="Wagatsuma M."/>
            <person name="Shiratori A."/>
            <person name="Sudo H."/>
            <person name="Hosoiri T."/>
            <person name="Kaku Y."/>
            <person name="Kodaira H."/>
            <person name="Kondo H."/>
            <person name="Sugawara M."/>
            <person name="Takahashi M."/>
            <person name="Kanda K."/>
            <person name="Yokoi T."/>
            <person name="Furuya T."/>
            <person name="Kikkawa E."/>
            <person name="Omura Y."/>
            <person name="Abe K."/>
            <person name="Kamihara K."/>
            <person name="Katsuta N."/>
            <person name="Sato K."/>
            <person name="Tanikawa M."/>
            <person name="Yamazaki M."/>
            <person name="Ninomiya K."/>
            <person name="Ishibashi T."/>
            <person name="Yamashita H."/>
            <person name="Murakawa K."/>
            <person name="Fujimori K."/>
            <person name="Tanai H."/>
            <person name="Kimata M."/>
            <person name="Watanabe M."/>
            <person name="Hiraoka S."/>
            <person name="Chiba Y."/>
            <person name="Ishida S."/>
            <person name="Ono Y."/>
            <person name="Takiguchi S."/>
            <person name="Watanabe S."/>
            <person name="Yosida M."/>
            <person name="Hotuta T."/>
            <person name="Kusano J."/>
            <person name="Kanehori K."/>
            <person name="Takahashi-Fujii A."/>
            <person name="Hara H."/>
            <person name="Tanase T.-O."/>
            <person name="Nomura Y."/>
            <person name="Togiya S."/>
            <person name="Komai F."/>
            <person name="Hara R."/>
            <person name="Takeuchi K."/>
            <person name="Arita M."/>
            <person name="Imose N."/>
            <person name="Musashino K."/>
            <person name="Yuuki H."/>
            <person name="Oshima A."/>
            <person name="Sasaki N."/>
            <person name="Aotsuka S."/>
            <person name="Yoshikawa Y."/>
            <person name="Matsunawa H."/>
            <person name="Ichihara T."/>
            <person name="Shiohata N."/>
            <person name="Sano S."/>
            <person name="Moriya S."/>
            <person name="Momiyama H."/>
            <person name="Satoh N."/>
            <person name="Takami S."/>
            <person name="Terashima Y."/>
            <person name="Suzuki O."/>
            <person name="Nakagawa S."/>
            <person name="Senoh A."/>
            <person name="Mizoguchi H."/>
            <person name="Goto Y."/>
            <person name="Shimizu F."/>
            <person name="Wakebe H."/>
            <person name="Hishigaki H."/>
            <person name="Watanabe T."/>
            <person name="Sugiyama A."/>
            <person name="Takemoto M."/>
            <person name="Kawakami B."/>
            <person name="Yamazaki M."/>
            <person name="Watanabe K."/>
            <person name="Kumagai A."/>
            <person name="Itakura S."/>
            <person name="Fukuzumi Y."/>
            <person name="Fujimori Y."/>
            <person name="Komiyama M."/>
            <person name="Tashiro H."/>
            <person name="Tanigami A."/>
            <person name="Fujiwara T."/>
            <person name="Ono T."/>
            <person name="Yamada K."/>
            <person name="Fujii Y."/>
            <person name="Ozaki K."/>
            <person name="Hirao M."/>
            <person name="Ohmori Y."/>
            <person name="Kawabata A."/>
            <person name="Hikiji T."/>
            <person name="Kobatake N."/>
            <person name="Inagaki H."/>
            <person name="Ikema Y."/>
            <person name="Okamoto S."/>
            <person name="Okitani R."/>
            <person name="Kawakami T."/>
            <person name="Noguchi S."/>
            <person name="Itoh T."/>
            <person name="Shigeta K."/>
            <person name="Senba T."/>
            <person name="Matsumura K."/>
            <person name="Nakajima Y."/>
            <person name="Mizuno T."/>
            <person name="Morinaga M."/>
            <person name="Sasaki M."/>
            <person name="Togashi T."/>
            <person name="Oyama M."/>
            <person name="Hata H."/>
            <person name="Watanabe M."/>
            <person name="Komatsu T."/>
            <person name="Mizushima-Sugano J."/>
            <person name="Satoh T."/>
            <person name="Shirai Y."/>
            <person name="Takahashi Y."/>
            <person name="Nakagawa K."/>
            <person name="Okumura K."/>
            <person name="Nagase T."/>
            <person name="Nomura N."/>
            <person name="Kikuchi H."/>
            <person name="Masuho Y."/>
            <person name="Yamashita R."/>
            <person name="Nakai K."/>
            <person name="Yada T."/>
            <person name="Nakamura Y."/>
            <person name="Ohara O."/>
            <person name="Isogai T."/>
            <person name="Sugano S."/>
        </authorList>
    </citation>
    <scope>NUCLEOTIDE SEQUENCE [LARGE SCALE MRNA]</scope>
</reference>
<reference key="5">
    <citation type="journal article" date="2003" name="Nature">
        <title>The DNA sequence and analysis of human chromosome 6.</title>
        <authorList>
            <person name="Mungall A.J."/>
            <person name="Palmer S.A."/>
            <person name="Sims S.K."/>
            <person name="Edwards C.A."/>
            <person name="Ashurst J.L."/>
            <person name="Wilming L."/>
            <person name="Jones M.C."/>
            <person name="Horton R."/>
            <person name="Hunt S.E."/>
            <person name="Scott C.E."/>
            <person name="Gilbert J.G.R."/>
            <person name="Clamp M.E."/>
            <person name="Bethel G."/>
            <person name="Milne S."/>
            <person name="Ainscough R."/>
            <person name="Almeida J.P."/>
            <person name="Ambrose K.D."/>
            <person name="Andrews T.D."/>
            <person name="Ashwell R.I.S."/>
            <person name="Babbage A.K."/>
            <person name="Bagguley C.L."/>
            <person name="Bailey J."/>
            <person name="Banerjee R."/>
            <person name="Barker D.J."/>
            <person name="Barlow K.F."/>
            <person name="Bates K."/>
            <person name="Beare D.M."/>
            <person name="Beasley H."/>
            <person name="Beasley O."/>
            <person name="Bird C.P."/>
            <person name="Blakey S.E."/>
            <person name="Bray-Allen S."/>
            <person name="Brook J."/>
            <person name="Brown A.J."/>
            <person name="Brown J.Y."/>
            <person name="Burford D.C."/>
            <person name="Burrill W."/>
            <person name="Burton J."/>
            <person name="Carder C."/>
            <person name="Carter N.P."/>
            <person name="Chapman J.C."/>
            <person name="Clark S.Y."/>
            <person name="Clark G."/>
            <person name="Clee C.M."/>
            <person name="Clegg S."/>
            <person name="Cobley V."/>
            <person name="Collier R.E."/>
            <person name="Collins J.E."/>
            <person name="Colman L.K."/>
            <person name="Corby N.R."/>
            <person name="Coville G.J."/>
            <person name="Culley K.M."/>
            <person name="Dhami P."/>
            <person name="Davies J."/>
            <person name="Dunn M."/>
            <person name="Earthrowl M.E."/>
            <person name="Ellington A.E."/>
            <person name="Evans K.A."/>
            <person name="Faulkner L."/>
            <person name="Francis M.D."/>
            <person name="Frankish A."/>
            <person name="Frankland J."/>
            <person name="French L."/>
            <person name="Garner P."/>
            <person name="Garnett J."/>
            <person name="Ghori M.J."/>
            <person name="Gilby L.M."/>
            <person name="Gillson C.J."/>
            <person name="Glithero R.J."/>
            <person name="Grafham D.V."/>
            <person name="Grant M."/>
            <person name="Gribble S."/>
            <person name="Griffiths C."/>
            <person name="Griffiths M.N.D."/>
            <person name="Hall R."/>
            <person name="Halls K.S."/>
            <person name="Hammond S."/>
            <person name="Harley J.L."/>
            <person name="Hart E.A."/>
            <person name="Heath P.D."/>
            <person name="Heathcott R."/>
            <person name="Holmes S.J."/>
            <person name="Howden P.J."/>
            <person name="Howe K.L."/>
            <person name="Howell G.R."/>
            <person name="Huckle E."/>
            <person name="Humphray S.J."/>
            <person name="Humphries M.D."/>
            <person name="Hunt A.R."/>
            <person name="Johnson C.M."/>
            <person name="Joy A.A."/>
            <person name="Kay M."/>
            <person name="Keenan S.J."/>
            <person name="Kimberley A.M."/>
            <person name="King A."/>
            <person name="Laird G.K."/>
            <person name="Langford C."/>
            <person name="Lawlor S."/>
            <person name="Leongamornlert D.A."/>
            <person name="Leversha M."/>
            <person name="Lloyd C.R."/>
            <person name="Lloyd D.M."/>
            <person name="Loveland J.E."/>
            <person name="Lovell J."/>
            <person name="Martin S."/>
            <person name="Mashreghi-Mohammadi M."/>
            <person name="Maslen G.L."/>
            <person name="Matthews L."/>
            <person name="McCann O.T."/>
            <person name="McLaren S.J."/>
            <person name="McLay K."/>
            <person name="McMurray A."/>
            <person name="Moore M.J.F."/>
            <person name="Mullikin J.C."/>
            <person name="Niblett D."/>
            <person name="Nickerson T."/>
            <person name="Novik K.L."/>
            <person name="Oliver K."/>
            <person name="Overton-Larty E.K."/>
            <person name="Parker A."/>
            <person name="Patel R."/>
            <person name="Pearce A.V."/>
            <person name="Peck A.I."/>
            <person name="Phillimore B.J.C.T."/>
            <person name="Phillips S."/>
            <person name="Plumb R.W."/>
            <person name="Porter K.M."/>
            <person name="Ramsey Y."/>
            <person name="Ranby S.A."/>
            <person name="Rice C.M."/>
            <person name="Ross M.T."/>
            <person name="Searle S.M."/>
            <person name="Sehra H.K."/>
            <person name="Sheridan E."/>
            <person name="Skuce C.D."/>
            <person name="Smith S."/>
            <person name="Smith M."/>
            <person name="Spraggon L."/>
            <person name="Squares S.L."/>
            <person name="Steward C.A."/>
            <person name="Sycamore N."/>
            <person name="Tamlyn-Hall G."/>
            <person name="Tester J."/>
            <person name="Theaker A.J."/>
            <person name="Thomas D.W."/>
            <person name="Thorpe A."/>
            <person name="Tracey A."/>
            <person name="Tromans A."/>
            <person name="Tubby B."/>
            <person name="Wall M."/>
            <person name="Wallis J.M."/>
            <person name="West A.P."/>
            <person name="White S.S."/>
            <person name="Whitehead S.L."/>
            <person name="Whittaker H."/>
            <person name="Wild A."/>
            <person name="Willey D.J."/>
            <person name="Wilmer T.E."/>
            <person name="Wood J.M."/>
            <person name="Wray P.W."/>
            <person name="Wyatt J.C."/>
            <person name="Young L."/>
            <person name="Younger R.M."/>
            <person name="Bentley D.R."/>
            <person name="Coulson A."/>
            <person name="Durbin R.M."/>
            <person name="Hubbard T."/>
            <person name="Sulston J.E."/>
            <person name="Dunham I."/>
            <person name="Rogers J."/>
            <person name="Beck S."/>
        </authorList>
    </citation>
    <scope>NUCLEOTIDE SEQUENCE [LARGE SCALE GENOMIC DNA]</scope>
</reference>
<reference key="6">
    <citation type="submission" date="2005-07" db="EMBL/GenBank/DDBJ databases">
        <authorList>
            <person name="Mural R.J."/>
            <person name="Istrail S."/>
            <person name="Sutton G.G."/>
            <person name="Florea L."/>
            <person name="Halpern A.L."/>
            <person name="Mobarry C.M."/>
            <person name="Lippert R."/>
            <person name="Walenz B."/>
            <person name="Shatkay H."/>
            <person name="Dew I."/>
            <person name="Miller J.R."/>
            <person name="Flanigan M.J."/>
            <person name="Edwards N.J."/>
            <person name="Bolanos R."/>
            <person name="Fasulo D."/>
            <person name="Halldorsson B.V."/>
            <person name="Hannenhalli S."/>
            <person name="Turner R."/>
            <person name="Yooseph S."/>
            <person name="Lu F."/>
            <person name="Nusskern D.R."/>
            <person name="Shue B.C."/>
            <person name="Zheng X.H."/>
            <person name="Zhong F."/>
            <person name="Delcher A.L."/>
            <person name="Huson D.H."/>
            <person name="Kravitz S.A."/>
            <person name="Mouchard L."/>
            <person name="Reinert K."/>
            <person name="Remington K.A."/>
            <person name="Clark A.G."/>
            <person name="Waterman M.S."/>
            <person name="Eichler E.E."/>
            <person name="Adams M.D."/>
            <person name="Hunkapiller M.W."/>
            <person name="Myers E.W."/>
            <person name="Venter J.C."/>
        </authorList>
    </citation>
    <scope>NUCLEOTIDE SEQUENCE [LARGE SCALE GENOMIC DNA]</scope>
</reference>
<reference key="7">
    <citation type="journal article" date="2004" name="Genome Res.">
        <title>The status, quality, and expansion of the NIH full-length cDNA project: the Mammalian Gene Collection (MGC).</title>
        <authorList>
            <consortium name="The MGC Project Team"/>
        </authorList>
    </citation>
    <scope>NUCLEOTIDE SEQUENCE [LARGE SCALE MRNA]</scope>
    <source>
        <tissue>Cervix</tissue>
    </source>
</reference>
<reference key="8">
    <citation type="journal article" date="2003" name="J. Protein Chem.">
        <title>Characterization and analysis of posttranslational modifications of the human large cytoplasmic ribosomal subunit proteins by mass spectrometry and Edman sequencing.</title>
        <authorList>
            <person name="Odintsova T.I."/>
            <person name="Muller E.C."/>
            <person name="Ivanov A.V."/>
            <person name="Egorov T.A."/>
            <person name="Bienert R."/>
            <person name="Vladimirov S.N."/>
            <person name="Kostka S."/>
            <person name="Otto A."/>
            <person name="Wittmann-Liebold B."/>
            <person name="Karpova G.G."/>
        </authorList>
    </citation>
    <scope>ACETYLATION AT SER-2</scope>
    <scope>IDENTIFICATION BY MASS SPECTROMETRY</scope>
    <scope>FUNCTION</scope>
    <scope>SUBUNIT</scope>
</reference>
<reference key="9">
    <citation type="journal article" date="2003" name="Nature">
        <title>Proteomic characterization of the human centrosome by protein correlation profiling.</title>
        <authorList>
            <person name="Andersen J.S."/>
            <person name="Wilkinson C.J."/>
            <person name="Mayor T."/>
            <person name="Mortensen P."/>
            <person name="Nigg E.A."/>
            <person name="Mann M."/>
        </authorList>
    </citation>
    <scope>IDENTIFICATION BY MASS SPECTROMETRY</scope>
    <source>
        <tissue>Lymphoblast</tissue>
    </source>
</reference>
<reference key="10">
    <citation type="journal article" date="2009" name="Science">
        <title>Lysine acetylation targets protein complexes and co-regulates major cellular functions.</title>
        <authorList>
            <person name="Choudhary C."/>
            <person name="Kumar C."/>
            <person name="Gnad F."/>
            <person name="Nielsen M.L."/>
            <person name="Rehman M."/>
            <person name="Walther T.C."/>
            <person name="Olsen J.V."/>
            <person name="Mann M."/>
        </authorList>
    </citation>
    <scope>ACETYLATION [LARGE SCALE ANALYSIS] AT LYS-106 AND LYS-118</scope>
    <scope>IDENTIFICATION BY MASS SPECTROMETRY [LARGE SCALE ANALYSIS]</scope>
</reference>
<reference key="11">
    <citation type="journal article" date="2011" name="BMC Syst. Biol.">
        <title>Initial characterization of the human central proteome.</title>
        <authorList>
            <person name="Burkard T.R."/>
            <person name="Planyavsky M."/>
            <person name="Kaupe I."/>
            <person name="Breitwieser F.P."/>
            <person name="Buerckstuemmer T."/>
            <person name="Bennett K.L."/>
            <person name="Superti-Furga G."/>
            <person name="Colinge J."/>
        </authorList>
    </citation>
    <scope>IDENTIFICATION BY MASS SPECTROMETRY [LARGE SCALE ANALYSIS]</scope>
</reference>
<reference key="12">
    <citation type="journal article" date="2014" name="Curr. Opin. Struct. Biol.">
        <title>A new system for naming ribosomal proteins.</title>
        <authorList>
            <person name="Ban N."/>
            <person name="Beckmann R."/>
            <person name="Cate J.H.D."/>
            <person name="Dinman J.D."/>
            <person name="Dragon F."/>
            <person name="Ellis S.R."/>
            <person name="Lafontaine D.L.J."/>
            <person name="Lindahl L."/>
            <person name="Liljas A."/>
            <person name="Lipton J.M."/>
            <person name="McAlear M.A."/>
            <person name="Moore P.B."/>
            <person name="Noller H.F."/>
            <person name="Ortega J."/>
            <person name="Panse V.G."/>
            <person name="Ramakrishnan V."/>
            <person name="Spahn C.M.T."/>
            <person name="Steitz T.A."/>
            <person name="Tchorzewski M."/>
            <person name="Tollervey D."/>
            <person name="Warren A.J."/>
            <person name="Williamson J.R."/>
            <person name="Wilson D."/>
            <person name="Yonath A."/>
            <person name="Yusupov M."/>
        </authorList>
    </citation>
    <scope>NOMENCLATURE</scope>
</reference>
<reference key="13">
    <citation type="journal article" date="2014" name="J. Proteomics">
        <title>An enzyme assisted RP-RPLC approach for in-depth analysis of human liver phosphoproteome.</title>
        <authorList>
            <person name="Bian Y."/>
            <person name="Song C."/>
            <person name="Cheng K."/>
            <person name="Dong M."/>
            <person name="Wang F."/>
            <person name="Huang J."/>
            <person name="Sun D."/>
            <person name="Wang L."/>
            <person name="Ye M."/>
            <person name="Zou H."/>
        </authorList>
    </citation>
    <scope>IDENTIFICATION BY MASS SPECTROMETRY [LARGE SCALE ANALYSIS]</scope>
    <source>
        <tissue>Liver</tissue>
    </source>
</reference>
<reference key="14">
    <citation type="journal article" date="2014" name="Proc. Natl. Acad. Sci. U.S.A.">
        <title>Mapping of SUMO sites and analysis of SUMOylation changes induced by external stimuli.</title>
        <authorList>
            <person name="Impens F."/>
            <person name="Radoshevich L."/>
            <person name="Cossart P."/>
            <person name="Ribet D."/>
        </authorList>
    </citation>
    <scope>SUMOYLATION [LARGE SCALE ANALYSIS] AT LYS-118</scope>
    <scope>IDENTIFICATION BY MASS SPECTROMETRY [LARGE SCALE ANALYSIS]</scope>
</reference>
<reference key="15">
    <citation type="journal article" date="2015" name="Proteomics">
        <title>N-terminome analysis of the human mitochondrial proteome.</title>
        <authorList>
            <person name="Vaca Jacome A.S."/>
            <person name="Rabilloud T."/>
            <person name="Schaeffer-Reiss C."/>
            <person name="Rompais M."/>
            <person name="Ayoub D."/>
            <person name="Lane L."/>
            <person name="Bairoch A."/>
            <person name="Van Dorsselaer A."/>
            <person name="Carapito C."/>
        </authorList>
    </citation>
    <scope>IDENTIFICATION BY MASS SPECTROMETRY [LARGE SCALE ANALYSIS]</scope>
</reference>
<reference key="16">
    <citation type="journal article" date="2017" name="Nat. Struct. Mol. Biol.">
        <title>Site-specific mapping of the human SUMO proteome reveals co-modification with phosphorylation.</title>
        <authorList>
            <person name="Hendriks I.A."/>
            <person name="Lyon D."/>
            <person name="Young C."/>
            <person name="Jensen L.J."/>
            <person name="Vertegaal A.C."/>
            <person name="Nielsen M.L."/>
        </authorList>
    </citation>
    <scope>SUMOYLATION [LARGE SCALE ANALYSIS] AT LYS-118 AND LYS-161</scope>
    <scope>IDENTIFICATION BY MASS SPECTROMETRY [LARGE SCALE ANALYSIS]</scope>
</reference>
<reference key="17">
    <citation type="journal article" date="2013" name="Nature">
        <title>Structures of the human and Drosophila 80S ribosome.</title>
        <authorList>
            <person name="Anger A.M."/>
            <person name="Armache J.P."/>
            <person name="Berninghausen O."/>
            <person name="Habeck M."/>
            <person name="Subklewe M."/>
            <person name="Wilson D.N."/>
            <person name="Beckmann R."/>
        </authorList>
    </citation>
    <scope>STRUCTURE BY ELECTRON MICROSCOPY (5.0 ANGSTROMS)</scope>
    <scope>FUNCTION</scope>
    <scope>SUBUNIT</scope>
    <scope>SUBCELLULAR LOCATION</scope>
</reference>
<reference evidence="8 9 10" key="18">
    <citation type="journal article" date="2020" name="Nat. Commun.">
        <title>Structural snapshots of human pre-60S ribosomal particles before and after nuclear export.</title>
        <authorList>
            <person name="Liang X."/>
            <person name="Zuo M.Q."/>
            <person name="Zhang Y."/>
            <person name="Li N."/>
            <person name="Ma C."/>
            <person name="Dong M.Q."/>
            <person name="Gao N."/>
        </authorList>
    </citation>
    <scope>STRUCTURE BY ELECTRON MICROSCOPY (3.09 ANGSTROMS)</scope>
    <scope>FUNCTION</scope>
    <scope>SUBUNIT</scope>
</reference>
<reference evidence="11" key="19">
    <citation type="journal article" date="2024" name="Nature">
        <title>The UFM1 E3 ligase recognizes and releases 60S ribosomes from ER translocons.</title>
        <authorList>
            <person name="Makhlouf L."/>
            <person name="Peter J.J."/>
            <person name="Magnussen H.M."/>
            <person name="Thakur R."/>
            <person name="Millrine D."/>
            <person name="Minshull T.C."/>
            <person name="Harrison G."/>
            <person name="Varghese J."/>
            <person name="Lamoliatte F."/>
            <person name="Foglizzo M."/>
            <person name="Macartney T."/>
            <person name="Calabrese A.N."/>
            <person name="Zeqiraj E."/>
            <person name="Kulathu Y."/>
        </authorList>
    </citation>
    <scope>STRUCTURE BY ELECTRON MICROSCOPY (3.2 ANGSTROMS) IN COMPLEX WITH CDK5RAP3 AND UFL1</scope>
</reference>
<dbReference type="EMBL" id="U12404">
    <property type="protein sequence ID" value="AAA86463.1"/>
    <property type="molecule type" value="mRNA"/>
</dbReference>
<dbReference type="EMBL" id="AB082926">
    <property type="protein sequence ID" value="BAC16802.1"/>
    <property type="molecule type" value="mRNA"/>
</dbReference>
<dbReference type="EMBL" id="BT020040">
    <property type="protein sequence ID" value="AAV38843.1"/>
    <property type="molecule type" value="mRNA"/>
</dbReference>
<dbReference type="EMBL" id="BT020041">
    <property type="protein sequence ID" value="AAV38844.1"/>
    <property type="molecule type" value="mRNA"/>
</dbReference>
<dbReference type="EMBL" id="AK313181">
    <property type="protein sequence ID" value="BAG35998.1"/>
    <property type="molecule type" value="mRNA"/>
</dbReference>
<dbReference type="EMBL" id="AL022721">
    <property type="status" value="NOT_ANNOTATED_CDS"/>
    <property type="molecule type" value="Genomic_DNA"/>
</dbReference>
<dbReference type="EMBL" id="CH471081">
    <property type="protein sequence ID" value="EAX03831.1"/>
    <property type="molecule type" value="Genomic_DNA"/>
</dbReference>
<dbReference type="EMBL" id="BC006791">
    <property type="protein sequence ID" value="AAH06791.1"/>
    <property type="molecule type" value="mRNA"/>
</dbReference>
<dbReference type="EMBL" id="BC011366">
    <property type="protein sequence ID" value="AAH11366.1"/>
    <property type="molecule type" value="mRNA"/>
</dbReference>
<dbReference type="EMBL" id="BC070216">
    <property type="protein sequence ID" value="AAH70216.1"/>
    <property type="molecule type" value="mRNA"/>
</dbReference>
<dbReference type="CCDS" id="CCDS4806.1"/>
<dbReference type="RefSeq" id="NP_009035.3">
    <property type="nucleotide sequence ID" value="NM_007104.4"/>
</dbReference>
<dbReference type="PDB" id="4UG0">
    <property type="method" value="EM"/>
    <property type="chains" value="Lz=1-217"/>
</dbReference>
<dbReference type="PDB" id="4V6X">
    <property type="method" value="EM"/>
    <property type="resolution" value="5.00 A"/>
    <property type="chains" value="Cz=1-217"/>
</dbReference>
<dbReference type="PDB" id="5AJ0">
    <property type="method" value="EM"/>
    <property type="resolution" value="3.50 A"/>
    <property type="chains" value="Au=1-217"/>
</dbReference>
<dbReference type="PDB" id="5LKS">
    <property type="method" value="EM"/>
    <property type="resolution" value="3.60 A"/>
    <property type="chains" value="Lz=1-217"/>
</dbReference>
<dbReference type="PDB" id="5T2C">
    <property type="method" value="EM"/>
    <property type="resolution" value="3.60 A"/>
    <property type="chains" value="l=1-217"/>
</dbReference>
<dbReference type="PDB" id="6IP5">
    <property type="method" value="EM"/>
    <property type="resolution" value="3.90 A"/>
    <property type="chains" value="2l=1-217"/>
</dbReference>
<dbReference type="PDB" id="6LQM">
    <property type="method" value="EM"/>
    <property type="resolution" value="3.09 A"/>
    <property type="chains" value="A=1-217"/>
</dbReference>
<dbReference type="PDB" id="6LSR">
    <property type="method" value="EM"/>
    <property type="resolution" value="3.13 A"/>
    <property type="chains" value="A=1-217"/>
</dbReference>
<dbReference type="PDB" id="6LU8">
    <property type="method" value="EM"/>
    <property type="resolution" value="3.13 A"/>
    <property type="chains" value="A=1-217"/>
</dbReference>
<dbReference type="PDB" id="6OLG">
    <property type="method" value="EM"/>
    <property type="resolution" value="3.40 A"/>
    <property type="chains" value="Au=1-217"/>
</dbReference>
<dbReference type="PDB" id="6QZP">
    <property type="method" value="EM"/>
    <property type="resolution" value="2.90 A"/>
    <property type="chains" value="Lz=1-217"/>
</dbReference>
<dbReference type="PDB" id="6Y6X">
    <property type="method" value="EM"/>
    <property type="resolution" value="2.80 A"/>
    <property type="chains" value="Lz=1-217"/>
</dbReference>
<dbReference type="PDB" id="6Z6L">
    <property type="method" value="EM"/>
    <property type="resolution" value="3.00 A"/>
    <property type="chains" value="Lz=1-217"/>
</dbReference>
<dbReference type="PDB" id="6Z6M">
    <property type="method" value="EM"/>
    <property type="resolution" value="3.10 A"/>
    <property type="chains" value="Lz=1-217"/>
</dbReference>
<dbReference type="PDB" id="6Z6N">
    <property type="method" value="EM"/>
    <property type="resolution" value="2.90 A"/>
    <property type="chains" value="Lz=1-217"/>
</dbReference>
<dbReference type="PDB" id="6ZM7">
    <property type="method" value="EM"/>
    <property type="resolution" value="2.70 A"/>
    <property type="chains" value="Lz=1-217"/>
</dbReference>
<dbReference type="PDB" id="6ZME">
    <property type="method" value="EM"/>
    <property type="resolution" value="3.00 A"/>
    <property type="chains" value="Lz=1-217"/>
</dbReference>
<dbReference type="PDB" id="6ZMI">
    <property type="method" value="EM"/>
    <property type="resolution" value="2.60 A"/>
    <property type="chains" value="Lz=1-217"/>
</dbReference>
<dbReference type="PDB" id="6ZMO">
    <property type="method" value="EM"/>
    <property type="resolution" value="3.10 A"/>
    <property type="chains" value="Lz=1-217"/>
</dbReference>
<dbReference type="PDB" id="8FKT">
    <property type="method" value="EM"/>
    <property type="resolution" value="2.81 A"/>
    <property type="chains" value="BB=1-217"/>
</dbReference>
<dbReference type="PDB" id="8FKU">
    <property type="method" value="EM"/>
    <property type="resolution" value="2.82 A"/>
    <property type="chains" value="BB=1-217"/>
</dbReference>
<dbReference type="PDB" id="8FKV">
    <property type="method" value="EM"/>
    <property type="resolution" value="2.47 A"/>
    <property type="chains" value="BB=1-217"/>
</dbReference>
<dbReference type="PDB" id="8FKW">
    <property type="method" value="EM"/>
    <property type="resolution" value="2.50 A"/>
    <property type="chains" value="BB=1-217"/>
</dbReference>
<dbReference type="PDB" id="8FKX">
    <property type="method" value="EM"/>
    <property type="resolution" value="2.59 A"/>
    <property type="chains" value="BB=1-217"/>
</dbReference>
<dbReference type="PDB" id="8FKY">
    <property type="method" value="EM"/>
    <property type="resolution" value="2.67 A"/>
    <property type="chains" value="BB=1-217"/>
</dbReference>
<dbReference type="PDB" id="8FL2">
    <property type="method" value="EM"/>
    <property type="resolution" value="2.67 A"/>
    <property type="chains" value="BB=1-217"/>
</dbReference>
<dbReference type="PDB" id="8FL3">
    <property type="method" value="EM"/>
    <property type="resolution" value="2.53 A"/>
    <property type="chains" value="BB=1-217"/>
</dbReference>
<dbReference type="PDB" id="8FL4">
    <property type="method" value="EM"/>
    <property type="resolution" value="2.89 A"/>
    <property type="chains" value="BB=1-217"/>
</dbReference>
<dbReference type="PDB" id="8G5Y">
    <property type="method" value="EM"/>
    <property type="resolution" value="2.29 A"/>
    <property type="chains" value="Lz=1-217"/>
</dbReference>
<dbReference type="PDB" id="8G60">
    <property type="method" value="EM"/>
    <property type="resolution" value="2.54 A"/>
    <property type="chains" value="Lz=1-217"/>
</dbReference>
<dbReference type="PDB" id="8G61">
    <property type="method" value="EM"/>
    <property type="resolution" value="2.94 A"/>
    <property type="chains" value="Lz=1-217"/>
</dbReference>
<dbReference type="PDB" id="8G6J">
    <property type="method" value="EM"/>
    <property type="resolution" value="2.80 A"/>
    <property type="chains" value="Lz=1-217"/>
</dbReference>
<dbReference type="PDB" id="8IDY">
    <property type="method" value="EM"/>
    <property type="resolution" value="3.00 A"/>
    <property type="chains" value="t=1-217"/>
</dbReference>
<dbReference type="PDB" id="8IFD">
    <property type="method" value="EM"/>
    <property type="resolution" value="2.59 A"/>
    <property type="chains" value="2l=1-217"/>
</dbReference>
<dbReference type="PDB" id="8IFE">
    <property type="method" value="EM"/>
    <property type="resolution" value="2.57 A"/>
    <property type="chains" value="2l=1-217"/>
</dbReference>
<dbReference type="PDB" id="8INF">
    <property type="method" value="EM"/>
    <property type="resolution" value="3.00 A"/>
    <property type="chains" value="q=1-217"/>
</dbReference>
<dbReference type="PDB" id="8K2C">
    <property type="method" value="EM"/>
    <property type="resolution" value="2.40 A"/>
    <property type="chains" value="Lz=1-217"/>
</dbReference>
<dbReference type="PDB" id="8OHD">
    <property type="method" value="EM"/>
    <property type="resolution" value="3.10 A"/>
    <property type="chains" value="Lz=1-217"/>
</dbReference>
<dbReference type="PDB" id="8OJ0">
    <property type="method" value="EM"/>
    <property type="resolution" value="3.30 A"/>
    <property type="chains" value="Lz=1-217"/>
</dbReference>
<dbReference type="PDB" id="8OJ5">
    <property type="method" value="EM"/>
    <property type="resolution" value="2.90 A"/>
    <property type="chains" value="Lz=1-217"/>
</dbReference>
<dbReference type="PDB" id="8OJ8">
    <property type="method" value="EM"/>
    <property type="resolution" value="3.30 A"/>
    <property type="chains" value="Lz=1-217"/>
</dbReference>
<dbReference type="PDB" id="8QFC">
    <property type="method" value="EM"/>
    <property type="resolution" value="3.20 A"/>
    <property type="chains" value="A=1-217"/>
</dbReference>
<dbReference type="PDB" id="8UKB">
    <property type="method" value="EM"/>
    <property type="resolution" value="3.05 A"/>
    <property type="chains" value="Lz=1-217"/>
</dbReference>
<dbReference type="PDB" id="8XSX">
    <property type="method" value="EM"/>
    <property type="resolution" value="2.40 A"/>
    <property type="chains" value="Lz=1-217"/>
</dbReference>
<dbReference type="PDB" id="8XSY">
    <property type="method" value="EM"/>
    <property type="resolution" value="3.00 A"/>
    <property type="chains" value="Lz=1-217"/>
</dbReference>
<dbReference type="PDB" id="8Y0W">
    <property type="method" value="EM"/>
    <property type="resolution" value="3.40 A"/>
    <property type="chains" value="Lz=1-217"/>
</dbReference>
<dbReference type="PDB" id="8YOP">
    <property type="method" value="EM"/>
    <property type="resolution" value="2.20 A"/>
    <property type="chains" value="Lz=1-217"/>
</dbReference>
<dbReference type="PDBsum" id="4UG0"/>
<dbReference type="PDBsum" id="4V6X"/>
<dbReference type="PDBsum" id="5AJ0"/>
<dbReference type="PDBsum" id="5LKS"/>
<dbReference type="PDBsum" id="5T2C"/>
<dbReference type="PDBsum" id="6IP5"/>
<dbReference type="PDBsum" id="6LQM"/>
<dbReference type="PDBsum" id="6LSR"/>
<dbReference type="PDBsum" id="6LU8"/>
<dbReference type="PDBsum" id="6OLG"/>
<dbReference type="PDBsum" id="6QZP"/>
<dbReference type="PDBsum" id="6Y6X"/>
<dbReference type="PDBsum" id="6Z6L"/>
<dbReference type="PDBsum" id="6Z6M"/>
<dbReference type="PDBsum" id="6Z6N"/>
<dbReference type="PDBsum" id="6ZM7"/>
<dbReference type="PDBsum" id="6ZME"/>
<dbReference type="PDBsum" id="6ZMI"/>
<dbReference type="PDBsum" id="6ZMO"/>
<dbReference type="PDBsum" id="8FKT"/>
<dbReference type="PDBsum" id="8FKU"/>
<dbReference type="PDBsum" id="8FKV"/>
<dbReference type="PDBsum" id="8FKW"/>
<dbReference type="PDBsum" id="8FKX"/>
<dbReference type="PDBsum" id="8FKY"/>
<dbReference type="PDBsum" id="8FL2"/>
<dbReference type="PDBsum" id="8FL3"/>
<dbReference type="PDBsum" id="8FL4"/>
<dbReference type="PDBsum" id="8G5Y"/>
<dbReference type="PDBsum" id="8G60"/>
<dbReference type="PDBsum" id="8G61"/>
<dbReference type="PDBsum" id="8G6J"/>
<dbReference type="PDBsum" id="8IDY"/>
<dbReference type="PDBsum" id="8IFD"/>
<dbReference type="PDBsum" id="8IFE"/>
<dbReference type="PDBsum" id="8INF"/>
<dbReference type="PDBsum" id="8K2C"/>
<dbReference type="PDBsum" id="8OHD"/>
<dbReference type="PDBsum" id="8OJ0"/>
<dbReference type="PDBsum" id="8OJ5"/>
<dbReference type="PDBsum" id="8OJ8"/>
<dbReference type="PDBsum" id="8QFC"/>
<dbReference type="PDBsum" id="8UKB"/>
<dbReference type="PDBsum" id="8XSX"/>
<dbReference type="PDBsum" id="8XSY"/>
<dbReference type="PDBsum" id="8Y0W"/>
<dbReference type="PDBsum" id="8YOP"/>
<dbReference type="EMDB" id="EMD-0948"/>
<dbReference type="EMDB" id="EMD-0963"/>
<dbReference type="EMDB" id="EMD-0978"/>
<dbReference type="EMDB" id="EMD-10709"/>
<dbReference type="EMDB" id="EMD-11098"/>
<dbReference type="EMDB" id="EMD-11099"/>
<dbReference type="EMDB" id="EMD-11100"/>
<dbReference type="EMDB" id="EMD-11288"/>
<dbReference type="EMDB" id="EMD-11289"/>
<dbReference type="EMDB" id="EMD-11292"/>
<dbReference type="EMDB" id="EMD-11299"/>
<dbReference type="EMDB" id="EMD-16880"/>
<dbReference type="EMDB" id="EMD-16902"/>
<dbReference type="EMDB" id="EMD-16905"/>
<dbReference type="EMDB" id="EMD-16908"/>
<dbReference type="EMDB" id="EMD-18381"/>
<dbReference type="EMDB" id="EMD-29256"/>
<dbReference type="EMDB" id="EMD-29257"/>
<dbReference type="EMDB" id="EMD-29258"/>
<dbReference type="EMDB" id="EMD-29259"/>
<dbReference type="EMDB" id="EMD-29260"/>
<dbReference type="EMDB" id="EMD-29261"/>
<dbReference type="EMDB" id="EMD-29265"/>
<dbReference type="EMDB" id="EMD-29266"/>
<dbReference type="EMDB" id="EMD-29267"/>
<dbReference type="EMDB" id="EMD-29757"/>
<dbReference type="EMDB" id="EMD-29758"/>
<dbReference type="EMDB" id="EMD-29759"/>
<dbReference type="EMDB" id="EMD-29760"/>
<dbReference type="EMDB" id="EMD-29771"/>
<dbReference type="EMDB" id="EMD-35371"/>
<dbReference type="EMDB" id="EMD-35413"/>
<dbReference type="EMDB" id="EMD-35414"/>
<dbReference type="EMDB" id="EMD-35597"/>
<dbReference type="EMDB" id="EMD-36838"/>
<dbReference type="EMDB" id="EMD-38629"/>
<dbReference type="EMDB" id="EMD-38630"/>
<dbReference type="EMDB" id="EMD-3883"/>
<dbReference type="EMDB" id="EMD-39456"/>
<dbReference type="EMDB" id="EMD-4070"/>
<dbReference type="EMDB" id="EMD-42351"/>
<dbReference type="EMDB" id="EMD-9701"/>
<dbReference type="SMR" id="P62906"/>
<dbReference type="BioGRID" id="110813">
    <property type="interactions" value="539"/>
</dbReference>
<dbReference type="ComplexPortal" id="CPX-5183">
    <property type="entry name" value="60S cytosolic large ribosomal subunit"/>
</dbReference>
<dbReference type="ComplexPortal" id="CPX-7664">
    <property type="entry name" value="60S cytosolic large ribosomal subunit, testis-specific variant"/>
</dbReference>
<dbReference type="ComplexPortal" id="CPX-7665">
    <property type="entry name" value="60S cytosolic large ribosomal subunit, striated muscle variant"/>
</dbReference>
<dbReference type="CORUM" id="P62906"/>
<dbReference type="FunCoup" id="P62906">
    <property type="interactions" value="2217"/>
</dbReference>
<dbReference type="IntAct" id="P62906">
    <property type="interactions" value="255"/>
</dbReference>
<dbReference type="MINT" id="P62906"/>
<dbReference type="STRING" id="9606.ENSP00000363018"/>
<dbReference type="GlyGen" id="P62906">
    <property type="glycosylation" value="1 site, 1 O-linked glycan (1 site)"/>
</dbReference>
<dbReference type="iPTMnet" id="P62906"/>
<dbReference type="MetOSite" id="P62906"/>
<dbReference type="PhosphoSitePlus" id="P62906"/>
<dbReference type="SwissPalm" id="P62906"/>
<dbReference type="BioMuta" id="RPL10A"/>
<dbReference type="DMDM" id="51702773"/>
<dbReference type="jPOST" id="P62906"/>
<dbReference type="MassIVE" id="P62906"/>
<dbReference type="PaxDb" id="9606-ENSP00000363018"/>
<dbReference type="PeptideAtlas" id="P62906"/>
<dbReference type="PRIDE" id="P62906"/>
<dbReference type="ProteomicsDB" id="57450"/>
<dbReference type="Pumba" id="P62906"/>
<dbReference type="TopDownProteomics" id="P62906"/>
<dbReference type="Antibodypedia" id="29510">
    <property type="antibodies" value="257 antibodies from 28 providers"/>
</dbReference>
<dbReference type="DNASU" id="4736"/>
<dbReference type="Ensembl" id="ENST00000322203.7">
    <property type="protein sequence ID" value="ENSP00000363018.3"/>
    <property type="gene ID" value="ENSG00000198755.11"/>
</dbReference>
<dbReference type="GeneID" id="4736"/>
<dbReference type="KEGG" id="hsa:4736"/>
<dbReference type="MANE-Select" id="ENST00000322203.7">
    <property type="protein sequence ID" value="ENSP00000363018.3"/>
    <property type="RefSeq nucleotide sequence ID" value="NM_007104.5"/>
    <property type="RefSeq protein sequence ID" value="NP_009035.3"/>
</dbReference>
<dbReference type="UCSC" id="uc003okp.2">
    <property type="organism name" value="human"/>
</dbReference>
<dbReference type="AGR" id="HGNC:10299"/>
<dbReference type="CTD" id="4736"/>
<dbReference type="DisGeNET" id="4736"/>
<dbReference type="GeneCards" id="RPL10A"/>
<dbReference type="HGNC" id="HGNC:10299">
    <property type="gene designation" value="RPL10A"/>
</dbReference>
<dbReference type="HPA" id="ENSG00000198755">
    <property type="expression patterns" value="Low tissue specificity"/>
</dbReference>
<dbReference type="MalaCards" id="RPL10A"/>
<dbReference type="MIM" id="615660">
    <property type="type" value="gene"/>
</dbReference>
<dbReference type="neXtProt" id="NX_P62906"/>
<dbReference type="OpenTargets" id="ENSG00000198755"/>
<dbReference type="PharmGKB" id="PA34661"/>
<dbReference type="VEuPathDB" id="HostDB:ENSG00000198755"/>
<dbReference type="eggNOG" id="KOG1570">
    <property type="taxonomic scope" value="Eukaryota"/>
</dbReference>
<dbReference type="GeneTree" id="ENSGT00390000008767"/>
<dbReference type="HOGENOM" id="CLU_062853_3_0_1"/>
<dbReference type="InParanoid" id="P62906"/>
<dbReference type="OMA" id="GPRNKMP"/>
<dbReference type="OrthoDB" id="2449818at2759"/>
<dbReference type="PAN-GO" id="P62906">
    <property type="GO annotations" value="3 GO annotations based on evolutionary models"/>
</dbReference>
<dbReference type="PhylomeDB" id="P62906"/>
<dbReference type="TreeFam" id="TF300791"/>
<dbReference type="PathwayCommons" id="P62906"/>
<dbReference type="Reactome" id="R-HSA-156827">
    <property type="pathway name" value="L13a-mediated translational silencing of Ceruloplasmin expression"/>
</dbReference>
<dbReference type="Reactome" id="R-HSA-156902">
    <property type="pathway name" value="Peptide chain elongation"/>
</dbReference>
<dbReference type="Reactome" id="R-HSA-1799339">
    <property type="pathway name" value="SRP-dependent cotranslational protein targeting to membrane"/>
</dbReference>
<dbReference type="Reactome" id="R-HSA-192823">
    <property type="pathway name" value="Viral mRNA Translation"/>
</dbReference>
<dbReference type="Reactome" id="R-HSA-2408557">
    <property type="pathway name" value="Selenocysteine synthesis"/>
</dbReference>
<dbReference type="Reactome" id="R-HSA-6791226">
    <property type="pathway name" value="Major pathway of rRNA processing in the nucleolus and cytosol"/>
</dbReference>
<dbReference type="Reactome" id="R-HSA-72689">
    <property type="pathway name" value="Formation of a pool of free 40S subunits"/>
</dbReference>
<dbReference type="Reactome" id="R-HSA-72706">
    <property type="pathway name" value="GTP hydrolysis and joining of the 60S ribosomal subunit"/>
</dbReference>
<dbReference type="Reactome" id="R-HSA-72764">
    <property type="pathway name" value="Eukaryotic Translation Termination"/>
</dbReference>
<dbReference type="Reactome" id="R-HSA-9010553">
    <property type="pathway name" value="Regulation of expression of SLITs and ROBOs"/>
</dbReference>
<dbReference type="Reactome" id="R-HSA-9633012">
    <property type="pathway name" value="Response of EIF2AK4 (GCN2) to amino acid deficiency"/>
</dbReference>
<dbReference type="Reactome" id="R-HSA-975956">
    <property type="pathway name" value="Nonsense Mediated Decay (NMD) independent of the Exon Junction Complex (EJC)"/>
</dbReference>
<dbReference type="Reactome" id="R-HSA-975957">
    <property type="pathway name" value="Nonsense Mediated Decay (NMD) enhanced by the Exon Junction Complex (EJC)"/>
</dbReference>
<dbReference type="SignaLink" id="P62906"/>
<dbReference type="SIGNOR" id="P62906"/>
<dbReference type="BioGRID-ORCS" id="4736">
    <property type="hits" value="825 hits in 1155 CRISPR screens"/>
</dbReference>
<dbReference type="CD-CODE" id="232F8A39">
    <property type="entry name" value="P-body"/>
</dbReference>
<dbReference type="CD-CODE" id="91857CE7">
    <property type="entry name" value="Nucleolus"/>
</dbReference>
<dbReference type="CD-CODE" id="FB4E32DD">
    <property type="entry name" value="Presynaptic clusters and postsynaptic densities"/>
</dbReference>
<dbReference type="ChiTaRS" id="RPL10A">
    <property type="organism name" value="human"/>
</dbReference>
<dbReference type="GeneWiki" id="RPL10A"/>
<dbReference type="GenomeRNAi" id="4736"/>
<dbReference type="Pharos" id="P62906">
    <property type="development level" value="Tbio"/>
</dbReference>
<dbReference type="PRO" id="PR:P62906"/>
<dbReference type="Proteomes" id="UP000005640">
    <property type="component" value="Chromosome 6"/>
</dbReference>
<dbReference type="RNAct" id="P62906">
    <property type="molecule type" value="protein"/>
</dbReference>
<dbReference type="Bgee" id="ENSG00000198755">
    <property type="expression patterns" value="Expressed in right uterine tube and 114 other cell types or tissues"/>
</dbReference>
<dbReference type="GO" id="GO:0005737">
    <property type="term" value="C:cytoplasm"/>
    <property type="evidence" value="ECO:0000303"/>
    <property type="project" value="ComplexPortal"/>
</dbReference>
<dbReference type="GO" id="GO:0005829">
    <property type="term" value="C:cytosol"/>
    <property type="evidence" value="ECO:0000304"/>
    <property type="project" value="Reactome"/>
</dbReference>
<dbReference type="GO" id="GO:0022625">
    <property type="term" value="C:cytosolic large ribosomal subunit"/>
    <property type="evidence" value="ECO:0000314"/>
    <property type="project" value="UniProtKB"/>
</dbReference>
<dbReference type="GO" id="GO:0022626">
    <property type="term" value="C:cytosolic ribosome"/>
    <property type="evidence" value="ECO:0000314"/>
    <property type="project" value="FlyBase"/>
</dbReference>
<dbReference type="GO" id="GO:0070062">
    <property type="term" value="C:extracellular exosome"/>
    <property type="evidence" value="ECO:0007005"/>
    <property type="project" value="UniProtKB"/>
</dbReference>
<dbReference type="GO" id="GO:0005925">
    <property type="term" value="C:focal adhesion"/>
    <property type="evidence" value="ECO:0007005"/>
    <property type="project" value="UniProtKB"/>
</dbReference>
<dbReference type="GO" id="GO:0016020">
    <property type="term" value="C:membrane"/>
    <property type="evidence" value="ECO:0007005"/>
    <property type="project" value="UniProtKB"/>
</dbReference>
<dbReference type="GO" id="GO:0005634">
    <property type="term" value="C:nucleus"/>
    <property type="evidence" value="ECO:0007005"/>
    <property type="project" value="UniProtKB"/>
</dbReference>
<dbReference type="GO" id="GO:0014069">
    <property type="term" value="C:postsynaptic density"/>
    <property type="evidence" value="ECO:0007669"/>
    <property type="project" value="Ensembl"/>
</dbReference>
<dbReference type="GO" id="GO:0003723">
    <property type="term" value="F:RNA binding"/>
    <property type="evidence" value="ECO:0007005"/>
    <property type="project" value="UniProtKB"/>
</dbReference>
<dbReference type="GO" id="GO:0003735">
    <property type="term" value="F:structural constituent of ribosome"/>
    <property type="evidence" value="ECO:0000314"/>
    <property type="project" value="UniProtKB"/>
</dbReference>
<dbReference type="GO" id="GO:0002181">
    <property type="term" value="P:cytoplasmic translation"/>
    <property type="evidence" value="ECO:0000314"/>
    <property type="project" value="UniProtKB"/>
</dbReference>
<dbReference type="GO" id="GO:0045471">
    <property type="term" value="P:response to ethanol"/>
    <property type="evidence" value="ECO:0007669"/>
    <property type="project" value="Ensembl"/>
</dbReference>
<dbReference type="GO" id="GO:0006412">
    <property type="term" value="P:translation"/>
    <property type="evidence" value="ECO:0000303"/>
    <property type="project" value="UniProtKB"/>
</dbReference>
<dbReference type="CDD" id="cd00403">
    <property type="entry name" value="Ribosomal_L1"/>
    <property type="match status" value="1"/>
</dbReference>
<dbReference type="FunFam" id="3.30.190.20:FF:000006">
    <property type="entry name" value="Ribosomal protein"/>
    <property type="match status" value="1"/>
</dbReference>
<dbReference type="FunFam" id="3.40.50.790:FF:000002">
    <property type="entry name" value="Ribosomal protein"/>
    <property type="match status" value="1"/>
</dbReference>
<dbReference type="FunFam" id="3.30.190.20:FF:000009">
    <property type="entry name" value="Ribosomal protein L10a"/>
    <property type="match status" value="1"/>
</dbReference>
<dbReference type="Gene3D" id="3.30.190.20">
    <property type="match status" value="1"/>
</dbReference>
<dbReference type="Gene3D" id="3.40.50.790">
    <property type="match status" value="1"/>
</dbReference>
<dbReference type="InterPro" id="IPR050257">
    <property type="entry name" value="eL8/uL1-like"/>
</dbReference>
<dbReference type="InterPro" id="IPR002143">
    <property type="entry name" value="Ribosomal_uL1"/>
</dbReference>
<dbReference type="InterPro" id="IPR023674">
    <property type="entry name" value="Ribosomal_uL1-like"/>
</dbReference>
<dbReference type="InterPro" id="IPR028364">
    <property type="entry name" value="Ribosomal_uL1/biogenesis"/>
</dbReference>
<dbReference type="InterPro" id="IPR016095">
    <property type="entry name" value="Ribosomal_uL1_3-a/b-sand"/>
</dbReference>
<dbReference type="InterPro" id="IPR023673">
    <property type="entry name" value="Ribosomal_uL1_CS"/>
</dbReference>
<dbReference type="PANTHER" id="PTHR23105">
    <property type="entry name" value="RIBOSOMAL PROTEIN L7AE FAMILY MEMBER"/>
    <property type="match status" value="1"/>
</dbReference>
<dbReference type="Pfam" id="PF00687">
    <property type="entry name" value="Ribosomal_L1"/>
    <property type="match status" value="1"/>
</dbReference>
<dbReference type="PIRSF" id="PIRSF002155">
    <property type="entry name" value="Ribosomal_L1"/>
    <property type="match status" value="1"/>
</dbReference>
<dbReference type="SUPFAM" id="SSF56808">
    <property type="entry name" value="Ribosomal protein L1"/>
    <property type="match status" value="1"/>
</dbReference>
<dbReference type="PROSITE" id="PS01199">
    <property type="entry name" value="RIBOSOMAL_L1"/>
    <property type="match status" value="1"/>
</dbReference>
<name>RL10A_HUMAN</name>
<proteinExistence type="evidence at protein level"/>
<organism>
    <name type="scientific">Homo sapiens</name>
    <name type="common">Human</name>
    <dbReference type="NCBI Taxonomy" id="9606"/>
    <lineage>
        <taxon>Eukaryota</taxon>
        <taxon>Metazoa</taxon>
        <taxon>Chordata</taxon>
        <taxon>Craniata</taxon>
        <taxon>Vertebrata</taxon>
        <taxon>Euteleostomi</taxon>
        <taxon>Mammalia</taxon>
        <taxon>Eutheria</taxon>
        <taxon>Euarchontoglires</taxon>
        <taxon>Primates</taxon>
        <taxon>Haplorrhini</taxon>
        <taxon>Catarrhini</taxon>
        <taxon>Hominidae</taxon>
        <taxon>Homo</taxon>
    </lineage>
</organism>
<accession>P62906</accession>
<accession>B2R801</accession>
<accession>P52859</accession>
<accession>P53025</accession>
<accession>Q5TZT6</accession>
<accession>Q8J013</accession>
<comment type="function">
    <text evidence="3 4 7">Component of the large ribosomal subunit (PubMed:12962325, PubMed:23636399, PubMed:32669547). The ribosome is a large ribonucleoprotein complex responsible for the synthesis of proteins in the cell (PubMed:12962325, PubMed:23636399, PubMed:32669547).</text>
</comment>
<comment type="subunit">
    <text evidence="3 4 7">Component of the large ribosomal subunit (PubMed:12962325, PubMed:23636399, PubMed:32669547).</text>
</comment>
<comment type="interaction">
    <interactant intactId="EBI-356860">
        <id>P62906</id>
    </interactant>
    <interactant intactId="EBI-5323863">
        <id>Q5S007</id>
        <label>LRRK2</label>
    </interactant>
    <organismsDiffer>false</organismsDiffer>
    <experiments>4</experiments>
</comment>
<comment type="interaction">
    <interactant intactId="EBI-356860">
        <id>P62906</id>
    </interactant>
    <interactant intactId="EBI-3918154">
        <id>Q9UGC6</id>
        <label>RGS17</label>
    </interactant>
    <organismsDiffer>false</organismsDiffer>
    <experiments>6</experiments>
</comment>
<comment type="interaction">
    <interactant intactId="EBI-356860">
        <id>P62906</id>
    </interactant>
    <interactant intactId="EBI-354380">
        <id>P62913</id>
        <label>RPL11</label>
    </interactant>
    <organismsDiffer>false</organismsDiffer>
    <experiments>3</experiments>
</comment>
<comment type="interaction">
    <interactant intactId="EBI-356860">
        <id>P62906</id>
    </interactant>
    <interactant intactId="EBI-352378">
        <id>P61247</id>
        <label>RPS3A</label>
    </interactant>
    <organismsDiffer>false</organismsDiffer>
    <experiments>2</experiments>
</comment>
<comment type="subcellular location">
    <subcellularLocation>
        <location evidence="3">Cytoplasm</location>
    </subcellularLocation>
</comment>
<comment type="similarity">
    <text evidence="6">Belongs to the universal ribosomal protein uL1 family.</text>
</comment>
<gene>
    <name type="primary">RPL10A</name>
    <name type="synonym">NEDD6</name>
</gene>
<keyword id="KW-0002">3D-structure</keyword>
<keyword id="KW-0007">Acetylation</keyword>
<keyword id="KW-0963">Cytoplasm</keyword>
<keyword id="KW-1017">Isopeptide bond</keyword>
<keyword id="KW-0597">Phosphoprotein</keyword>
<keyword id="KW-1267">Proteomics identification</keyword>
<keyword id="KW-1185">Reference proteome</keyword>
<keyword id="KW-0687">Ribonucleoprotein</keyword>
<keyword id="KW-0689">Ribosomal protein</keyword>
<keyword id="KW-0832">Ubl conjugation</keyword>